<sequence>MVVAKKSLGQHFLTDESFLDRIVDALPPLNPLKLVEIGVGLGDLTLKLLDRYPLKTYEIDSSLCEKMRSKLKVQKKPFKLELVEKDALFLKEEEPYFLISNLPYYIATRLVLNALKDPKCRGLLVMTQKEVALKFCAKDSQNALSVLAHAIGNATLLFDVPPSAFSPPPKVFSSVFEVIKESLKEKALASLAQVPFFEEALQKGFETLEDFLKACFSSPRKTLSNNLKKSVSYKEKLDKVLDFLALENQPTSVRASEIKDYLKLLNYLLKG</sequence>
<proteinExistence type="inferred from homology"/>
<dbReference type="EC" id="2.1.1.182" evidence="1"/>
<dbReference type="EMBL" id="CP000241">
    <property type="protein sequence ID" value="ABF85423.1"/>
    <property type="molecule type" value="Genomic_DNA"/>
</dbReference>
<dbReference type="RefSeq" id="WP_000259377.1">
    <property type="nucleotide sequence ID" value="NC_008086.1"/>
</dbReference>
<dbReference type="SMR" id="Q1CRJ9"/>
<dbReference type="KEGG" id="hpa:HPAG1_1356"/>
<dbReference type="HOGENOM" id="CLU_041220_0_2_7"/>
<dbReference type="GO" id="GO:0005829">
    <property type="term" value="C:cytosol"/>
    <property type="evidence" value="ECO:0007669"/>
    <property type="project" value="TreeGrafter"/>
</dbReference>
<dbReference type="GO" id="GO:0052908">
    <property type="term" value="F:16S rRNA (adenine(1518)-N(6)/adenine(1519)-N(6))-dimethyltransferase activity"/>
    <property type="evidence" value="ECO:0007669"/>
    <property type="project" value="UniProtKB-EC"/>
</dbReference>
<dbReference type="GO" id="GO:0003723">
    <property type="term" value="F:RNA binding"/>
    <property type="evidence" value="ECO:0007669"/>
    <property type="project" value="UniProtKB-KW"/>
</dbReference>
<dbReference type="FunFam" id="3.40.50.150:FF:000456">
    <property type="entry name" value="Ribosomal RNA small subunit methyltransferase A"/>
    <property type="match status" value="1"/>
</dbReference>
<dbReference type="Gene3D" id="1.10.8.100">
    <property type="entry name" value="Ribosomal RNA adenine dimethylase-like, domain 2"/>
    <property type="match status" value="1"/>
</dbReference>
<dbReference type="Gene3D" id="3.40.50.150">
    <property type="entry name" value="Vaccinia Virus protein VP39"/>
    <property type="match status" value="1"/>
</dbReference>
<dbReference type="HAMAP" id="MF_00607">
    <property type="entry name" value="16SrRNA_methyltr_A"/>
    <property type="match status" value="1"/>
</dbReference>
<dbReference type="InterPro" id="IPR001737">
    <property type="entry name" value="KsgA/Erm"/>
</dbReference>
<dbReference type="InterPro" id="IPR023165">
    <property type="entry name" value="rRNA_Ade_diMease-like_C"/>
</dbReference>
<dbReference type="InterPro" id="IPR020596">
    <property type="entry name" value="rRNA_Ade_Mease_Trfase_CS"/>
</dbReference>
<dbReference type="InterPro" id="IPR020598">
    <property type="entry name" value="rRNA_Ade_methylase_Trfase_N"/>
</dbReference>
<dbReference type="InterPro" id="IPR011530">
    <property type="entry name" value="rRNA_adenine_dimethylase"/>
</dbReference>
<dbReference type="InterPro" id="IPR029063">
    <property type="entry name" value="SAM-dependent_MTases_sf"/>
</dbReference>
<dbReference type="NCBIfam" id="TIGR00755">
    <property type="entry name" value="ksgA"/>
    <property type="match status" value="1"/>
</dbReference>
<dbReference type="PANTHER" id="PTHR11727">
    <property type="entry name" value="DIMETHYLADENOSINE TRANSFERASE"/>
    <property type="match status" value="1"/>
</dbReference>
<dbReference type="PANTHER" id="PTHR11727:SF7">
    <property type="entry name" value="DIMETHYLADENOSINE TRANSFERASE-RELATED"/>
    <property type="match status" value="1"/>
</dbReference>
<dbReference type="Pfam" id="PF00398">
    <property type="entry name" value="RrnaAD"/>
    <property type="match status" value="1"/>
</dbReference>
<dbReference type="SMART" id="SM00650">
    <property type="entry name" value="rADc"/>
    <property type="match status" value="1"/>
</dbReference>
<dbReference type="SUPFAM" id="SSF53335">
    <property type="entry name" value="S-adenosyl-L-methionine-dependent methyltransferases"/>
    <property type="match status" value="1"/>
</dbReference>
<dbReference type="PROSITE" id="PS01131">
    <property type="entry name" value="RRNA_A_DIMETH"/>
    <property type="match status" value="1"/>
</dbReference>
<dbReference type="PROSITE" id="PS51689">
    <property type="entry name" value="SAM_RNA_A_N6_MT"/>
    <property type="match status" value="1"/>
</dbReference>
<protein>
    <recommendedName>
        <fullName evidence="1">Ribosomal RNA small subunit methyltransferase A</fullName>
        <ecNumber evidence="1">2.1.1.182</ecNumber>
    </recommendedName>
    <alternativeName>
        <fullName evidence="1">16S rRNA (adenine(1518)-N(6)/adenine(1519)-N(6))-dimethyltransferase</fullName>
    </alternativeName>
    <alternativeName>
        <fullName evidence="1">16S rRNA dimethyladenosine transferase</fullName>
    </alternativeName>
    <alternativeName>
        <fullName evidence="1">16S rRNA dimethylase</fullName>
    </alternativeName>
    <alternativeName>
        <fullName evidence="1">S-adenosylmethionine-6-N', N'-adenosyl(rRNA) dimethyltransferase</fullName>
    </alternativeName>
</protein>
<comment type="function">
    <text evidence="1">Specifically dimethylates two adjacent adenosines (A1518 and A1519) in the loop of a conserved hairpin near the 3'-end of 16S rRNA in the 30S particle. May play a critical role in biogenesis of 30S subunits.</text>
</comment>
<comment type="catalytic activity">
    <reaction evidence="1">
        <text>adenosine(1518)/adenosine(1519) in 16S rRNA + 4 S-adenosyl-L-methionine = N(6)-dimethyladenosine(1518)/N(6)-dimethyladenosine(1519) in 16S rRNA + 4 S-adenosyl-L-homocysteine + 4 H(+)</text>
        <dbReference type="Rhea" id="RHEA:19609"/>
        <dbReference type="Rhea" id="RHEA-COMP:10232"/>
        <dbReference type="Rhea" id="RHEA-COMP:10233"/>
        <dbReference type="ChEBI" id="CHEBI:15378"/>
        <dbReference type="ChEBI" id="CHEBI:57856"/>
        <dbReference type="ChEBI" id="CHEBI:59789"/>
        <dbReference type="ChEBI" id="CHEBI:74411"/>
        <dbReference type="ChEBI" id="CHEBI:74493"/>
        <dbReference type="EC" id="2.1.1.182"/>
    </reaction>
</comment>
<comment type="subcellular location">
    <subcellularLocation>
        <location evidence="1">Cytoplasm</location>
    </subcellularLocation>
</comment>
<comment type="similarity">
    <text evidence="1">Belongs to the class I-like SAM-binding methyltransferase superfamily. rRNA adenine N(6)-methyltransferase family. RsmA subfamily.</text>
</comment>
<feature type="chain" id="PRO_0000257295" description="Ribosomal RNA small subunit methyltransferase A">
    <location>
        <begin position="1"/>
        <end position="271"/>
    </location>
</feature>
<feature type="binding site" evidence="1">
    <location>
        <position position="11"/>
    </location>
    <ligand>
        <name>S-adenosyl-L-methionine</name>
        <dbReference type="ChEBI" id="CHEBI:59789"/>
    </ligand>
</feature>
<feature type="binding site" evidence="1">
    <location>
        <position position="13"/>
    </location>
    <ligand>
        <name>S-adenosyl-L-methionine</name>
        <dbReference type="ChEBI" id="CHEBI:59789"/>
    </ligand>
</feature>
<feature type="binding site" evidence="1">
    <location>
        <position position="38"/>
    </location>
    <ligand>
        <name>S-adenosyl-L-methionine</name>
        <dbReference type="ChEBI" id="CHEBI:59789"/>
    </ligand>
</feature>
<feature type="binding site" evidence="1">
    <location>
        <position position="58"/>
    </location>
    <ligand>
        <name>S-adenosyl-L-methionine</name>
        <dbReference type="ChEBI" id="CHEBI:59789"/>
    </ligand>
</feature>
<feature type="binding site" evidence="1">
    <location>
        <position position="86"/>
    </location>
    <ligand>
        <name>S-adenosyl-L-methionine</name>
        <dbReference type="ChEBI" id="CHEBI:59789"/>
    </ligand>
</feature>
<feature type="binding site" evidence="1">
    <location>
        <position position="101"/>
    </location>
    <ligand>
        <name>S-adenosyl-L-methionine</name>
        <dbReference type="ChEBI" id="CHEBI:59789"/>
    </ligand>
</feature>
<accession>Q1CRJ9</accession>
<organism>
    <name type="scientific">Helicobacter pylori (strain HPAG1)</name>
    <dbReference type="NCBI Taxonomy" id="357544"/>
    <lineage>
        <taxon>Bacteria</taxon>
        <taxon>Pseudomonadati</taxon>
        <taxon>Campylobacterota</taxon>
        <taxon>Epsilonproteobacteria</taxon>
        <taxon>Campylobacterales</taxon>
        <taxon>Helicobacteraceae</taxon>
        <taxon>Helicobacter</taxon>
    </lineage>
</organism>
<gene>
    <name evidence="1" type="primary">rsmA</name>
    <name evidence="1" type="synonym">ksgA</name>
    <name type="ordered locus">HPAG1_1356</name>
</gene>
<evidence type="ECO:0000255" key="1">
    <source>
        <dbReference type="HAMAP-Rule" id="MF_00607"/>
    </source>
</evidence>
<keyword id="KW-0963">Cytoplasm</keyword>
<keyword id="KW-0489">Methyltransferase</keyword>
<keyword id="KW-0694">RNA-binding</keyword>
<keyword id="KW-0698">rRNA processing</keyword>
<keyword id="KW-0949">S-adenosyl-L-methionine</keyword>
<keyword id="KW-0808">Transferase</keyword>
<reference key="1">
    <citation type="journal article" date="2006" name="Proc. Natl. Acad. Sci. U.S.A.">
        <title>The complete genome sequence of a chronic atrophic gastritis Helicobacter pylori strain: evolution during disease progression.</title>
        <authorList>
            <person name="Oh J.D."/>
            <person name="Kling-Baeckhed H."/>
            <person name="Giannakis M."/>
            <person name="Xu J."/>
            <person name="Fulton R.S."/>
            <person name="Fulton L.A."/>
            <person name="Cordum H.S."/>
            <person name="Wang C."/>
            <person name="Elliott G."/>
            <person name="Edwards J."/>
            <person name="Mardis E.R."/>
            <person name="Engstrand L.G."/>
            <person name="Gordon J.I."/>
        </authorList>
    </citation>
    <scope>NUCLEOTIDE SEQUENCE [LARGE SCALE GENOMIC DNA]</scope>
    <source>
        <strain>HPAG1</strain>
    </source>
</reference>
<name>RSMA_HELPH</name>